<evidence type="ECO:0000255" key="1">
    <source>
        <dbReference type="HAMAP-Rule" id="MF_00461"/>
    </source>
</evidence>
<evidence type="ECO:0000256" key="2">
    <source>
        <dbReference type="SAM" id="MobiDB-lite"/>
    </source>
</evidence>
<keyword id="KW-0004">4Fe-4S</keyword>
<keyword id="KW-0997">Cell inner membrane</keyword>
<keyword id="KW-1003">Cell membrane</keyword>
<keyword id="KW-0249">Electron transport</keyword>
<keyword id="KW-0408">Iron</keyword>
<keyword id="KW-0411">Iron-sulfur</keyword>
<keyword id="KW-0472">Membrane</keyword>
<keyword id="KW-0479">Metal-binding</keyword>
<keyword id="KW-0677">Repeat</keyword>
<keyword id="KW-1278">Translocase</keyword>
<keyword id="KW-0813">Transport</keyword>
<comment type="function">
    <text evidence="1">Part of a membrane-bound complex that couples electron transfer with translocation of ions across the membrane. Required to maintain the reduced state of SoxR.</text>
</comment>
<comment type="cofactor">
    <cofactor evidence="1">
        <name>[4Fe-4S] cluster</name>
        <dbReference type="ChEBI" id="CHEBI:49883"/>
    </cofactor>
    <text evidence="1">Binds 2 [4Fe-4S] clusters per subunit.</text>
</comment>
<comment type="subunit">
    <text evidence="1">The complex is composed of six subunits: RsxA, RsxB, RsxC, RsxD, RsxE and RsxG.</text>
</comment>
<comment type="subcellular location">
    <subcellularLocation>
        <location evidence="1">Cell inner membrane</location>
        <topology evidence="1">Peripheral membrane protein</topology>
    </subcellularLocation>
</comment>
<comment type="similarity">
    <text evidence="1">Belongs to the 4Fe4S bacterial-type ferredoxin family. RnfC subfamily.</text>
</comment>
<proteinExistence type="inferred from homology"/>
<gene>
    <name evidence="1" type="primary">rsxC</name>
    <name type="ordered locus">ECIAI1_1681</name>
</gene>
<feature type="chain" id="PRO_1000194516" description="Ion-translocating oxidoreductase complex subunit C">
    <location>
        <begin position="1"/>
        <end position="708"/>
    </location>
</feature>
<feature type="domain" description="4Fe-4S ferredoxin-type 1" evidence="1">
    <location>
        <begin position="369"/>
        <end position="397"/>
    </location>
</feature>
<feature type="domain" description="4Fe-4S ferredoxin-type 2" evidence="1">
    <location>
        <begin position="407"/>
        <end position="436"/>
    </location>
</feature>
<feature type="region of interest" description="Disordered" evidence="2">
    <location>
        <begin position="599"/>
        <end position="686"/>
    </location>
</feature>
<feature type="binding site" evidence="1">
    <location>
        <position position="377"/>
    </location>
    <ligand>
        <name>[4Fe-4S] cluster</name>
        <dbReference type="ChEBI" id="CHEBI:49883"/>
        <label>1</label>
    </ligand>
</feature>
<feature type="binding site" evidence="1">
    <location>
        <position position="380"/>
    </location>
    <ligand>
        <name>[4Fe-4S] cluster</name>
        <dbReference type="ChEBI" id="CHEBI:49883"/>
        <label>1</label>
    </ligand>
</feature>
<feature type="binding site" evidence="1">
    <location>
        <position position="383"/>
    </location>
    <ligand>
        <name>[4Fe-4S] cluster</name>
        <dbReference type="ChEBI" id="CHEBI:49883"/>
        <label>1</label>
    </ligand>
</feature>
<feature type="binding site" evidence="1">
    <location>
        <position position="387"/>
    </location>
    <ligand>
        <name>[4Fe-4S] cluster</name>
        <dbReference type="ChEBI" id="CHEBI:49883"/>
        <label>2</label>
    </ligand>
</feature>
<feature type="binding site" evidence="1">
    <location>
        <position position="416"/>
    </location>
    <ligand>
        <name>[4Fe-4S] cluster</name>
        <dbReference type="ChEBI" id="CHEBI:49883"/>
        <label>2</label>
    </ligand>
</feature>
<feature type="binding site" evidence="1">
    <location>
        <position position="419"/>
    </location>
    <ligand>
        <name>[4Fe-4S] cluster</name>
        <dbReference type="ChEBI" id="CHEBI:49883"/>
        <label>2</label>
    </ligand>
</feature>
<feature type="binding site" evidence="1">
    <location>
        <position position="422"/>
    </location>
    <ligand>
        <name>[4Fe-4S] cluster</name>
        <dbReference type="ChEBI" id="CHEBI:49883"/>
        <label>2</label>
    </ligand>
</feature>
<feature type="binding site" evidence="1">
    <location>
        <position position="426"/>
    </location>
    <ligand>
        <name>[4Fe-4S] cluster</name>
        <dbReference type="ChEBI" id="CHEBI:49883"/>
        <label>1</label>
    </ligand>
</feature>
<organism>
    <name type="scientific">Escherichia coli O8 (strain IAI1)</name>
    <dbReference type="NCBI Taxonomy" id="585034"/>
    <lineage>
        <taxon>Bacteria</taxon>
        <taxon>Pseudomonadati</taxon>
        <taxon>Pseudomonadota</taxon>
        <taxon>Gammaproteobacteria</taxon>
        <taxon>Enterobacterales</taxon>
        <taxon>Enterobacteriaceae</taxon>
        <taxon>Escherichia</taxon>
    </lineage>
</organism>
<reference key="1">
    <citation type="journal article" date="2009" name="PLoS Genet.">
        <title>Organised genome dynamics in the Escherichia coli species results in highly diverse adaptive paths.</title>
        <authorList>
            <person name="Touchon M."/>
            <person name="Hoede C."/>
            <person name="Tenaillon O."/>
            <person name="Barbe V."/>
            <person name="Baeriswyl S."/>
            <person name="Bidet P."/>
            <person name="Bingen E."/>
            <person name="Bonacorsi S."/>
            <person name="Bouchier C."/>
            <person name="Bouvet O."/>
            <person name="Calteau A."/>
            <person name="Chiapello H."/>
            <person name="Clermont O."/>
            <person name="Cruveiller S."/>
            <person name="Danchin A."/>
            <person name="Diard M."/>
            <person name="Dossat C."/>
            <person name="Karoui M.E."/>
            <person name="Frapy E."/>
            <person name="Garry L."/>
            <person name="Ghigo J.M."/>
            <person name="Gilles A.M."/>
            <person name="Johnson J."/>
            <person name="Le Bouguenec C."/>
            <person name="Lescat M."/>
            <person name="Mangenot S."/>
            <person name="Martinez-Jehanne V."/>
            <person name="Matic I."/>
            <person name="Nassif X."/>
            <person name="Oztas S."/>
            <person name="Petit M.A."/>
            <person name="Pichon C."/>
            <person name="Rouy Z."/>
            <person name="Ruf C.S."/>
            <person name="Schneider D."/>
            <person name="Tourret J."/>
            <person name="Vacherie B."/>
            <person name="Vallenet D."/>
            <person name="Medigue C."/>
            <person name="Rocha E.P.C."/>
            <person name="Denamur E."/>
        </authorList>
    </citation>
    <scope>NUCLEOTIDE SEQUENCE [LARGE SCALE GENOMIC DNA]</scope>
    <source>
        <strain>IAI1</strain>
    </source>
</reference>
<name>RSXC_ECO8A</name>
<accession>B7M0I6</accession>
<dbReference type="EC" id="7.-.-.-" evidence="1"/>
<dbReference type="EMBL" id="CU928160">
    <property type="protein sequence ID" value="CAQ98538.1"/>
    <property type="molecule type" value="Genomic_DNA"/>
</dbReference>
<dbReference type="RefSeq" id="WP_000915770.1">
    <property type="nucleotide sequence ID" value="NC_011741.1"/>
</dbReference>
<dbReference type="SMR" id="B7M0I6"/>
<dbReference type="KEGG" id="ecr:ECIAI1_1681"/>
<dbReference type="HOGENOM" id="CLU_010808_2_1_6"/>
<dbReference type="GO" id="GO:0005886">
    <property type="term" value="C:plasma membrane"/>
    <property type="evidence" value="ECO:0007669"/>
    <property type="project" value="UniProtKB-SubCell"/>
</dbReference>
<dbReference type="GO" id="GO:0051539">
    <property type="term" value="F:4 iron, 4 sulfur cluster binding"/>
    <property type="evidence" value="ECO:0007669"/>
    <property type="project" value="UniProtKB-KW"/>
</dbReference>
<dbReference type="GO" id="GO:0009055">
    <property type="term" value="F:electron transfer activity"/>
    <property type="evidence" value="ECO:0007669"/>
    <property type="project" value="InterPro"/>
</dbReference>
<dbReference type="GO" id="GO:0046872">
    <property type="term" value="F:metal ion binding"/>
    <property type="evidence" value="ECO:0007669"/>
    <property type="project" value="UniProtKB-KW"/>
</dbReference>
<dbReference type="GO" id="GO:0022900">
    <property type="term" value="P:electron transport chain"/>
    <property type="evidence" value="ECO:0007669"/>
    <property type="project" value="UniProtKB-UniRule"/>
</dbReference>
<dbReference type="Gene3D" id="3.30.70.20">
    <property type="match status" value="1"/>
</dbReference>
<dbReference type="Gene3D" id="3.40.50.11540">
    <property type="entry name" value="NADH-ubiquinone oxidoreductase 51kDa subunit"/>
    <property type="match status" value="1"/>
</dbReference>
<dbReference type="HAMAP" id="MF_00461">
    <property type="entry name" value="RsxC_RnfC"/>
    <property type="match status" value="1"/>
</dbReference>
<dbReference type="InterPro" id="IPR017896">
    <property type="entry name" value="4Fe4S_Fe-S-bd"/>
</dbReference>
<dbReference type="InterPro" id="IPR017900">
    <property type="entry name" value="4Fe4S_Fe_S_CS"/>
</dbReference>
<dbReference type="InterPro" id="IPR010208">
    <property type="entry name" value="Ion_transpt_RnfC/RsxC"/>
</dbReference>
<dbReference type="InterPro" id="IPR011538">
    <property type="entry name" value="Nuo51_FMN-bd"/>
</dbReference>
<dbReference type="InterPro" id="IPR037225">
    <property type="entry name" value="Nuo51_FMN-bd_sf"/>
</dbReference>
<dbReference type="InterPro" id="IPR026902">
    <property type="entry name" value="RnfC_N"/>
</dbReference>
<dbReference type="InterPro" id="IPR019554">
    <property type="entry name" value="Soluble_ligand-bd"/>
</dbReference>
<dbReference type="NCBIfam" id="NF003454">
    <property type="entry name" value="PRK05035.1"/>
    <property type="match status" value="1"/>
</dbReference>
<dbReference type="NCBIfam" id="TIGR01945">
    <property type="entry name" value="rnfC"/>
    <property type="match status" value="1"/>
</dbReference>
<dbReference type="PANTHER" id="PTHR43034">
    <property type="entry name" value="ION-TRANSLOCATING OXIDOREDUCTASE COMPLEX SUBUNIT C"/>
    <property type="match status" value="1"/>
</dbReference>
<dbReference type="PANTHER" id="PTHR43034:SF2">
    <property type="entry name" value="ION-TRANSLOCATING OXIDOREDUCTASE COMPLEX SUBUNIT C"/>
    <property type="match status" value="1"/>
</dbReference>
<dbReference type="Pfam" id="PF01512">
    <property type="entry name" value="Complex1_51K"/>
    <property type="match status" value="1"/>
</dbReference>
<dbReference type="Pfam" id="PF12838">
    <property type="entry name" value="Fer4_7"/>
    <property type="match status" value="1"/>
</dbReference>
<dbReference type="Pfam" id="PF13375">
    <property type="entry name" value="RnfC_N"/>
    <property type="match status" value="1"/>
</dbReference>
<dbReference type="Pfam" id="PF10531">
    <property type="entry name" value="SLBB"/>
    <property type="match status" value="1"/>
</dbReference>
<dbReference type="SUPFAM" id="SSF46548">
    <property type="entry name" value="alpha-helical ferredoxin"/>
    <property type="match status" value="1"/>
</dbReference>
<dbReference type="SUPFAM" id="SSF142019">
    <property type="entry name" value="Nqo1 FMN-binding domain-like"/>
    <property type="match status" value="1"/>
</dbReference>
<dbReference type="PROSITE" id="PS00198">
    <property type="entry name" value="4FE4S_FER_1"/>
    <property type="match status" value="2"/>
</dbReference>
<dbReference type="PROSITE" id="PS51379">
    <property type="entry name" value="4FE4S_FER_2"/>
    <property type="match status" value="2"/>
</dbReference>
<protein>
    <recommendedName>
        <fullName evidence="1">Ion-translocating oxidoreductase complex subunit C</fullName>
        <ecNumber evidence="1">7.-.-.-</ecNumber>
    </recommendedName>
    <alternativeName>
        <fullName evidence="1">Rsx electron transport complex subunit C</fullName>
    </alternativeName>
</protein>
<sequence length="708" mass="76739">MLKLFSAFRKNKIWDFNGGIHPPEMKTQSNGTPLRQVPLAQRFVIPLKQHIGAEGELCVSVGDKVLRGQPLTRGRGKMLPVHAPTSGTVTAIAPHSTAHPSALAELSVIIDADGEDCWIPRDGWADYRTRSREELIERIHQFGVAGLGGAGFPTGVKLQGGGDKIETLIINAAECEPYITADDRLMQDCAAQVVEGIRILAHILQPREILIGIEDNKPQAISMLRAVLADSNDISLRVIPTKYPSGGAKQLTYILTGKQVPHGGRSSDIGVLMQNVGTAYAVKRAVIDGEPITERVVTLTGEAIARPGNVWARLGTPVRHLLNDAGFCPSADQMVIMGGPLMGFTLPWLDVPVVKITNCLLAPSANELGEPQEEQSCIRCSACADACPADLLPQQLYWFSKGQQHDKATTHNIADCIECGACAWVCPSNIPLVQYFRQEKAEIAAIRQEEKRAAEAKARFEARQARLEREKAARLERHKSAAVQPAAKDKDAIAAALARVKEKQAQATQPIVIKAGERPDNSAIIAAREARKAQARAKQAELQQTNDAATVADPRKTAVEAAIARAKARKLEQQQANAEPEEQVDPRKAAVEAAIARAKARKLEQQQSNAEPEEQVDPRKAAVEAAIARAKARKLEQQQANAEPEEQVDPRKAAVEAAIARAKARKLEQQQTNAEPEEQVDPRKAAVAAAIARAQAKKAAQQKVVNED</sequence>